<protein>
    <recommendedName>
        <fullName evidence="1">GTPase Der</fullName>
    </recommendedName>
    <alternativeName>
        <fullName evidence="1">GTP-binding protein EngA</fullName>
    </alternativeName>
</protein>
<feature type="chain" id="PRO_0000179022" description="GTPase Der">
    <location>
        <begin position="1"/>
        <end position="467"/>
    </location>
</feature>
<feature type="domain" description="EngA-type G 1">
    <location>
        <begin position="3"/>
        <end position="167"/>
    </location>
</feature>
<feature type="domain" description="EngA-type G 2">
    <location>
        <begin position="179"/>
        <end position="352"/>
    </location>
</feature>
<feature type="domain" description="KH-like" evidence="1">
    <location>
        <begin position="353"/>
        <end position="437"/>
    </location>
</feature>
<feature type="region of interest" description="Disordered" evidence="2">
    <location>
        <begin position="434"/>
        <end position="467"/>
    </location>
</feature>
<feature type="compositionally biased region" description="Basic residues" evidence="2">
    <location>
        <begin position="455"/>
        <end position="467"/>
    </location>
</feature>
<feature type="binding site" evidence="1">
    <location>
        <begin position="9"/>
        <end position="16"/>
    </location>
    <ligand>
        <name>GTP</name>
        <dbReference type="ChEBI" id="CHEBI:37565"/>
        <label>1</label>
    </ligand>
</feature>
<feature type="binding site" evidence="1">
    <location>
        <begin position="56"/>
        <end position="60"/>
    </location>
    <ligand>
        <name>GTP</name>
        <dbReference type="ChEBI" id="CHEBI:37565"/>
        <label>1</label>
    </ligand>
</feature>
<feature type="binding site" evidence="1">
    <location>
        <begin position="119"/>
        <end position="122"/>
    </location>
    <ligand>
        <name>GTP</name>
        <dbReference type="ChEBI" id="CHEBI:37565"/>
        <label>1</label>
    </ligand>
</feature>
<feature type="binding site" evidence="1">
    <location>
        <begin position="185"/>
        <end position="192"/>
    </location>
    <ligand>
        <name>GTP</name>
        <dbReference type="ChEBI" id="CHEBI:37565"/>
        <label>2</label>
    </ligand>
</feature>
<feature type="binding site" evidence="1">
    <location>
        <begin position="232"/>
        <end position="236"/>
    </location>
    <ligand>
        <name>GTP</name>
        <dbReference type="ChEBI" id="CHEBI:37565"/>
        <label>2</label>
    </ligand>
</feature>
<feature type="binding site" evidence="1">
    <location>
        <begin position="297"/>
        <end position="300"/>
    </location>
    <ligand>
        <name>GTP</name>
        <dbReference type="ChEBI" id="CHEBI:37565"/>
        <label>2</label>
    </ligand>
</feature>
<evidence type="ECO:0000255" key="1">
    <source>
        <dbReference type="HAMAP-Rule" id="MF_00195"/>
    </source>
</evidence>
<evidence type="ECO:0000256" key="2">
    <source>
        <dbReference type="SAM" id="MobiDB-lite"/>
    </source>
</evidence>
<organism>
    <name type="scientific">Nitrosomonas europaea (strain ATCC 19718 / CIP 103999 / KCTC 2705 / NBRC 14298)</name>
    <dbReference type="NCBI Taxonomy" id="228410"/>
    <lineage>
        <taxon>Bacteria</taxon>
        <taxon>Pseudomonadati</taxon>
        <taxon>Pseudomonadota</taxon>
        <taxon>Betaproteobacteria</taxon>
        <taxon>Nitrosomonadales</taxon>
        <taxon>Nitrosomonadaceae</taxon>
        <taxon>Nitrosomonas</taxon>
    </lineage>
</organism>
<accession>Q82XU6</accession>
<sequence>MKPTLVLVGRPNVGKSTLFNRLTRSRDAIVADIPGLTRDRHYGHGRLGLKPYLVVDTGGFEPVVKSGILHAMAKQTLQAVDEADIVLFIVDGRQGLAAQDKIIAEQLRKTGQKIILVVNKTEGMPYSSVTAEFHELGLGTPCAVSALHGDHLGELIDFALEGYPYEEETAAEPGQEKCPVIAIAGRPNVGKSTLINTLLGEERVIAFDQPGTTRDSIYVDFEYGQRSYTLIDTAGLRRSGKVWETVEKFSVVKTLQSIEAANVVILVLDAHHEISDQDAHIAGFILETGRSLVVAINKWDGLDDYQREIIKREFERKLGFLSFANLHYISALYGNGVKGLMPSVDAAYAAARAHIPTPKLTRAMLAAVAKQQPPRGGMSRPKLRYAHQGGENPPLIIVHGSMLEHVPQTYRRYLENTFREVFKLKGTPLRVEFRTGHNPYAGKKTPLTEEEARRAHSRRRRNRKKYG</sequence>
<gene>
    <name evidence="1" type="primary">der</name>
    <name type="synonym">engA</name>
    <name type="ordered locus">NE0153</name>
</gene>
<proteinExistence type="inferred from homology"/>
<comment type="function">
    <text evidence="1">GTPase that plays an essential role in the late steps of ribosome biogenesis.</text>
</comment>
<comment type="subunit">
    <text evidence="1">Associates with the 50S ribosomal subunit.</text>
</comment>
<comment type="similarity">
    <text evidence="1">Belongs to the TRAFAC class TrmE-Era-EngA-EngB-Septin-like GTPase superfamily. EngA (Der) GTPase family.</text>
</comment>
<keyword id="KW-0342">GTP-binding</keyword>
<keyword id="KW-0547">Nucleotide-binding</keyword>
<keyword id="KW-1185">Reference proteome</keyword>
<keyword id="KW-0677">Repeat</keyword>
<keyword id="KW-0690">Ribosome biogenesis</keyword>
<name>DER_NITEU</name>
<reference key="1">
    <citation type="journal article" date="2003" name="J. Bacteriol.">
        <title>Complete genome sequence of the ammonia-oxidizing bacterium and obligate chemolithoautotroph Nitrosomonas europaea.</title>
        <authorList>
            <person name="Chain P."/>
            <person name="Lamerdin J.E."/>
            <person name="Larimer F.W."/>
            <person name="Regala W."/>
            <person name="Lao V."/>
            <person name="Land M.L."/>
            <person name="Hauser L."/>
            <person name="Hooper A.B."/>
            <person name="Klotz M.G."/>
            <person name="Norton J."/>
            <person name="Sayavedra-Soto L.A."/>
            <person name="Arciero D.M."/>
            <person name="Hommes N.G."/>
            <person name="Whittaker M.M."/>
            <person name="Arp D.J."/>
        </authorList>
    </citation>
    <scope>NUCLEOTIDE SEQUENCE [LARGE SCALE GENOMIC DNA]</scope>
    <source>
        <strain>ATCC 19718 / CIP 103999 / KCTC 2705 / NBRC 14298</strain>
    </source>
</reference>
<dbReference type="EMBL" id="AL954747">
    <property type="protein sequence ID" value="CAD84064.1"/>
    <property type="molecule type" value="Genomic_DNA"/>
</dbReference>
<dbReference type="RefSeq" id="WP_011110800.1">
    <property type="nucleotide sequence ID" value="NC_004757.1"/>
</dbReference>
<dbReference type="SMR" id="Q82XU6"/>
<dbReference type="STRING" id="228410.NE0153"/>
<dbReference type="GeneID" id="87103363"/>
<dbReference type="KEGG" id="neu:NE0153"/>
<dbReference type="eggNOG" id="COG1160">
    <property type="taxonomic scope" value="Bacteria"/>
</dbReference>
<dbReference type="HOGENOM" id="CLU_016077_6_2_4"/>
<dbReference type="OrthoDB" id="9805918at2"/>
<dbReference type="PhylomeDB" id="Q82XU6"/>
<dbReference type="Proteomes" id="UP000001416">
    <property type="component" value="Chromosome"/>
</dbReference>
<dbReference type="GO" id="GO:0016887">
    <property type="term" value="F:ATP hydrolysis activity"/>
    <property type="evidence" value="ECO:0007669"/>
    <property type="project" value="InterPro"/>
</dbReference>
<dbReference type="GO" id="GO:0005525">
    <property type="term" value="F:GTP binding"/>
    <property type="evidence" value="ECO:0007669"/>
    <property type="project" value="UniProtKB-UniRule"/>
</dbReference>
<dbReference type="GO" id="GO:0043022">
    <property type="term" value="F:ribosome binding"/>
    <property type="evidence" value="ECO:0007669"/>
    <property type="project" value="TreeGrafter"/>
</dbReference>
<dbReference type="GO" id="GO:0042254">
    <property type="term" value="P:ribosome biogenesis"/>
    <property type="evidence" value="ECO:0007669"/>
    <property type="project" value="UniProtKB-KW"/>
</dbReference>
<dbReference type="CDD" id="cd01894">
    <property type="entry name" value="EngA1"/>
    <property type="match status" value="1"/>
</dbReference>
<dbReference type="CDD" id="cd01895">
    <property type="entry name" value="EngA2"/>
    <property type="match status" value="1"/>
</dbReference>
<dbReference type="FunFam" id="3.30.300.20:FF:000004">
    <property type="entry name" value="GTPase Der"/>
    <property type="match status" value="1"/>
</dbReference>
<dbReference type="FunFam" id="3.40.50.300:FF:000040">
    <property type="entry name" value="GTPase Der"/>
    <property type="match status" value="1"/>
</dbReference>
<dbReference type="FunFam" id="3.40.50.300:FF:000057">
    <property type="entry name" value="GTPase Der"/>
    <property type="match status" value="1"/>
</dbReference>
<dbReference type="Gene3D" id="3.30.300.20">
    <property type="match status" value="1"/>
</dbReference>
<dbReference type="Gene3D" id="3.40.50.300">
    <property type="entry name" value="P-loop containing nucleotide triphosphate hydrolases"/>
    <property type="match status" value="2"/>
</dbReference>
<dbReference type="HAMAP" id="MF_00195">
    <property type="entry name" value="GTPase_Der"/>
    <property type="match status" value="1"/>
</dbReference>
<dbReference type="InterPro" id="IPR003593">
    <property type="entry name" value="AAA+_ATPase"/>
</dbReference>
<dbReference type="InterPro" id="IPR031166">
    <property type="entry name" value="G_ENGA"/>
</dbReference>
<dbReference type="InterPro" id="IPR006073">
    <property type="entry name" value="GTP-bd"/>
</dbReference>
<dbReference type="InterPro" id="IPR016484">
    <property type="entry name" value="GTPase_Der"/>
</dbReference>
<dbReference type="InterPro" id="IPR032859">
    <property type="entry name" value="KH_dom-like"/>
</dbReference>
<dbReference type="InterPro" id="IPR015946">
    <property type="entry name" value="KH_dom-like_a/b"/>
</dbReference>
<dbReference type="InterPro" id="IPR027417">
    <property type="entry name" value="P-loop_NTPase"/>
</dbReference>
<dbReference type="InterPro" id="IPR005225">
    <property type="entry name" value="Small_GTP-bd"/>
</dbReference>
<dbReference type="NCBIfam" id="TIGR03594">
    <property type="entry name" value="GTPase_EngA"/>
    <property type="match status" value="1"/>
</dbReference>
<dbReference type="NCBIfam" id="TIGR00231">
    <property type="entry name" value="small_GTP"/>
    <property type="match status" value="2"/>
</dbReference>
<dbReference type="PANTHER" id="PTHR43834">
    <property type="entry name" value="GTPASE DER"/>
    <property type="match status" value="1"/>
</dbReference>
<dbReference type="PANTHER" id="PTHR43834:SF6">
    <property type="entry name" value="GTPASE DER"/>
    <property type="match status" value="1"/>
</dbReference>
<dbReference type="Pfam" id="PF14714">
    <property type="entry name" value="KH_dom-like"/>
    <property type="match status" value="1"/>
</dbReference>
<dbReference type="Pfam" id="PF01926">
    <property type="entry name" value="MMR_HSR1"/>
    <property type="match status" value="2"/>
</dbReference>
<dbReference type="PIRSF" id="PIRSF006485">
    <property type="entry name" value="GTP-binding_EngA"/>
    <property type="match status" value="1"/>
</dbReference>
<dbReference type="PRINTS" id="PR00326">
    <property type="entry name" value="GTP1OBG"/>
</dbReference>
<dbReference type="SMART" id="SM00382">
    <property type="entry name" value="AAA"/>
    <property type="match status" value="2"/>
</dbReference>
<dbReference type="SUPFAM" id="SSF52540">
    <property type="entry name" value="P-loop containing nucleoside triphosphate hydrolases"/>
    <property type="match status" value="2"/>
</dbReference>
<dbReference type="PROSITE" id="PS51712">
    <property type="entry name" value="G_ENGA"/>
    <property type="match status" value="2"/>
</dbReference>